<organism>
    <name type="scientific">Phaeosphaeria nodorum (strain SN15 / ATCC MYA-4574 / FGSC 10173)</name>
    <name type="common">Glume blotch fungus</name>
    <name type="synonym">Parastagonospora nodorum</name>
    <dbReference type="NCBI Taxonomy" id="321614"/>
    <lineage>
        <taxon>Eukaryota</taxon>
        <taxon>Fungi</taxon>
        <taxon>Dikarya</taxon>
        <taxon>Ascomycota</taxon>
        <taxon>Pezizomycotina</taxon>
        <taxon>Dothideomycetes</taxon>
        <taxon>Pleosporomycetidae</taxon>
        <taxon>Pleosporales</taxon>
        <taxon>Pleosporineae</taxon>
        <taxon>Phaeosphaeriaceae</taxon>
        <taxon>Parastagonospora</taxon>
    </lineage>
</organism>
<reference key="1">
    <citation type="journal article" date="2007" name="Plant Cell">
        <title>Dothideomycete-plant interactions illuminated by genome sequencing and EST analysis of the wheat pathogen Stagonospora nodorum.</title>
        <authorList>
            <person name="Hane J.K."/>
            <person name="Lowe R.G.T."/>
            <person name="Solomon P.S."/>
            <person name="Tan K.-C."/>
            <person name="Schoch C.L."/>
            <person name="Spatafora J.W."/>
            <person name="Crous P.W."/>
            <person name="Kodira C.D."/>
            <person name="Birren B.W."/>
            <person name="Galagan J.E."/>
            <person name="Torriani S.F.F."/>
            <person name="McDonald B.A."/>
            <person name="Oliver R.P."/>
        </authorList>
    </citation>
    <scope>NUCLEOTIDE SEQUENCE [LARGE SCALE GENOMIC DNA]</scope>
    <source>
        <strain>SN15 / ATCC MYA-4574 / FGSC 10173</strain>
    </source>
</reference>
<keyword id="KW-0007">Acetylation</keyword>
<keyword id="KW-0158">Chromosome</keyword>
<keyword id="KW-0238">DNA-binding</keyword>
<keyword id="KW-0488">Methylation</keyword>
<keyword id="KW-0544">Nucleosome core</keyword>
<keyword id="KW-0539">Nucleus</keyword>
<keyword id="KW-0597">Phosphoprotein</keyword>
<sequence length="136" mass="15319">MARTKQTARKSTGGKAPRKQLASKAARKSAPSTGGVKKPHRYKPGTVALREIRRYQKSTELLIRKLPFQRLVREIAQDFKSDLRFQSSAIGALQESVEAYLVSLFEDTNLCAIHAKRVTIQSKDIQLARRLRGERG</sequence>
<protein>
    <recommendedName>
        <fullName>Histone H3</fullName>
    </recommendedName>
</protein>
<name>H3_PHANO</name>
<comment type="function">
    <text>Core component of nucleosome. Nucleosomes wrap and compact DNA into chromatin, limiting DNA accessibility to the cellular machineries which require DNA as a template. Histones thereby play a central role in transcription regulation, DNA repair, DNA replication and chromosomal stability. DNA accessibility is regulated via a complex set of post-translational modifications of histones, also called histone code, and nucleosome remodeling.</text>
</comment>
<comment type="subunit">
    <text>The nucleosome is a histone octamer containing two molecules each of H2A, H2B, H3 and H4 assembled in one H3-H4 heterotetramer and two H2A-H2B heterodimers. The octamer wraps approximately 147 bp of DNA.</text>
</comment>
<comment type="subcellular location">
    <subcellularLocation>
        <location evidence="1">Nucleus</location>
    </subcellularLocation>
    <subcellularLocation>
        <location evidence="1">Chromosome</location>
    </subcellularLocation>
</comment>
<comment type="PTM">
    <text evidence="1">Phosphorylated to form H3S10ph. H3S10ph promotes subsequent H3K14ac formation and is required for transcriptional activation through TBP recruitment to the promoters (By similarity).</text>
</comment>
<comment type="PTM">
    <text evidence="1">Mono-, di- and trimethylated by the COMPASS complex to form H3K4me1/2/3. H3K4me activates gene expression by regulating transcription elongation and plays a role in telomere length maintenance. H3K4me enrichment correlates with transcription levels, and occurs in a 5' to 3' gradient with H3K4me3 enrichment at the 5'-end of genes, shifting to H3K4me2 and then H3K4me1. Methylated by SET2 to form H3K36me. H3K36me represses gene expression. Methylated by DOT1 to form H3K79me. H3K79me is required for association of SIR proteins with telomeric regions and for telomeric silencing. The COMPASS-mediated formation of H3K4me2/3 and the DOT1-mediated formation of H3K79me require H2BK123ub1 (By similarity).</text>
</comment>
<comment type="PTM">
    <text evidence="1">Acetylation of histone H3 leads to transcriptional activation. H3K14ac formation by GCN5 is promoted by H3S10ph. H3K14ac can also be formed by ESA1. H3K56ac formation occurs predominantly in newly synthesized H3 molecules during G1, S and G2/M of the cell cycle and may be involved in DNA repair (By similarity).</text>
</comment>
<comment type="similarity">
    <text evidence="3">Belongs to the histone H3 family.</text>
</comment>
<comment type="caution">
    <text evidence="3">To ensure consistency between histone entries, we follow the 'Brno' nomenclature for histone modifications, with positions referring to those used in the literature for the 'closest' model organism. Due to slight variations in histone sequences between organisms and to the presence of initiator methionine in UniProtKB/Swiss-Prot sequences, the actual positions of modified amino acids in the sequence generally differ. In this entry the following conventions are used: H3K4me1/2/3 = mono-, di- and trimethylated Lys-5; H3K9ac = acetylated Lys-10; H3K9me1 = monomethylated Lys-10; H3S10ph = phosphorylated Ser-11; H3K14ac = acetylated Lys-15; H3K14me2 = dimethylated Lys-15; H3K18ac = acetylated Lys-19; H3K18me1 = monomethylated Lys-19; H3K23ac = acetylated Lys-24; H3K23me1 = monomethylated Lys-24; H3K27ac = acetylated Lys-28; H3K27me1/2/3 = mono-, di- and trimethylated Lys-28; H3K36ac = acetylated Lys-37; H3K36me1/2/3 = mono-, di- and trimethylated Lys-37; H3K56ac = acetylated Lys-57; H3K64ac = acetylated Lys-65; H3K79me1/2/3 = mono-, di- and trimethylated Lys-80.</text>
</comment>
<dbReference type="EMBL" id="CH445328">
    <property type="status" value="NOT_ANNOTATED_CDS"/>
    <property type="molecule type" value="Genomic_DNA"/>
</dbReference>
<dbReference type="SMR" id="Q0UY45"/>
<dbReference type="FunCoup" id="Q0UY45">
    <property type="interactions" value="783"/>
</dbReference>
<dbReference type="STRING" id="321614.Q0UY45"/>
<dbReference type="VEuPathDB" id="FungiDB:JI435_033190"/>
<dbReference type="InParanoid" id="Q0UY45"/>
<dbReference type="OMA" id="HIFAEMA"/>
<dbReference type="OrthoDB" id="842664at2759"/>
<dbReference type="Proteomes" id="UP000001055">
    <property type="component" value="Unassembled WGS sequence"/>
</dbReference>
<dbReference type="GO" id="GO:0000786">
    <property type="term" value="C:nucleosome"/>
    <property type="evidence" value="ECO:0007669"/>
    <property type="project" value="UniProtKB-KW"/>
</dbReference>
<dbReference type="GO" id="GO:0005634">
    <property type="term" value="C:nucleus"/>
    <property type="evidence" value="ECO:0000318"/>
    <property type="project" value="GO_Central"/>
</dbReference>
<dbReference type="GO" id="GO:0003677">
    <property type="term" value="F:DNA binding"/>
    <property type="evidence" value="ECO:0007669"/>
    <property type="project" value="UniProtKB-KW"/>
</dbReference>
<dbReference type="GO" id="GO:0046982">
    <property type="term" value="F:protein heterodimerization activity"/>
    <property type="evidence" value="ECO:0007669"/>
    <property type="project" value="InterPro"/>
</dbReference>
<dbReference type="GO" id="GO:0030527">
    <property type="term" value="F:structural constituent of chromatin"/>
    <property type="evidence" value="ECO:0007669"/>
    <property type="project" value="InterPro"/>
</dbReference>
<dbReference type="GO" id="GO:0009303">
    <property type="term" value="P:rRNA transcription"/>
    <property type="evidence" value="ECO:0000318"/>
    <property type="project" value="GO_Central"/>
</dbReference>
<dbReference type="CDD" id="cd22911">
    <property type="entry name" value="HFD_H3"/>
    <property type="match status" value="1"/>
</dbReference>
<dbReference type="FunFam" id="1.10.20.10:FF:000010">
    <property type="entry name" value="Histone H3"/>
    <property type="match status" value="1"/>
</dbReference>
<dbReference type="Gene3D" id="1.10.20.10">
    <property type="entry name" value="Histone, subunit A"/>
    <property type="match status" value="1"/>
</dbReference>
<dbReference type="InterPro" id="IPR009072">
    <property type="entry name" value="Histone-fold"/>
</dbReference>
<dbReference type="InterPro" id="IPR007125">
    <property type="entry name" value="Histone_H2A/H2B/H3"/>
</dbReference>
<dbReference type="InterPro" id="IPR000164">
    <property type="entry name" value="Histone_H3/CENP-A"/>
</dbReference>
<dbReference type="PANTHER" id="PTHR11426">
    <property type="entry name" value="HISTONE H3"/>
    <property type="match status" value="1"/>
</dbReference>
<dbReference type="Pfam" id="PF00125">
    <property type="entry name" value="Histone"/>
    <property type="match status" value="1"/>
</dbReference>
<dbReference type="PRINTS" id="PR00622">
    <property type="entry name" value="HISTONEH3"/>
</dbReference>
<dbReference type="SMART" id="SM00428">
    <property type="entry name" value="H3"/>
    <property type="match status" value="1"/>
</dbReference>
<dbReference type="SUPFAM" id="SSF47113">
    <property type="entry name" value="Histone-fold"/>
    <property type="match status" value="1"/>
</dbReference>
<dbReference type="PROSITE" id="PS00322">
    <property type="entry name" value="HISTONE_H3_1"/>
    <property type="match status" value="1"/>
</dbReference>
<dbReference type="PROSITE" id="PS00959">
    <property type="entry name" value="HISTONE_H3_2"/>
    <property type="match status" value="1"/>
</dbReference>
<gene>
    <name type="primary">HHT1</name>
    <name type="ORF">SNOG_03319</name>
</gene>
<feature type="initiator methionine" description="Removed" evidence="1">
    <location>
        <position position="1"/>
    </location>
</feature>
<feature type="chain" id="PRO_0000297750" description="Histone H3">
    <location>
        <begin position="2"/>
        <end position="136"/>
    </location>
</feature>
<feature type="region of interest" description="Disordered" evidence="2">
    <location>
        <begin position="1"/>
        <end position="43"/>
    </location>
</feature>
<feature type="modified residue" description="N6,N6,N6-trimethyllysine; alternate" evidence="1">
    <location>
        <position position="5"/>
    </location>
</feature>
<feature type="modified residue" description="N6,N6-dimethyllysine; alternate" evidence="1">
    <location>
        <position position="5"/>
    </location>
</feature>
<feature type="modified residue" description="N6-methyllysine; alternate" evidence="1">
    <location>
        <position position="5"/>
    </location>
</feature>
<feature type="modified residue" description="N6-acetyllysine; alternate" evidence="1">
    <location>
        <position position="10"/>
    </location>
</feature>
<feature type="modified residue" description="N6-methyllysine; alternate" evidence="1">
    <location>
        <position position="10"/>
    </location>
</feature>
<feature type="modified residue" description="Phosphoserine" evidence="1">
    <location>
        <position position="11"/>
    </location>
</feature>
<feature type="modified residue" description="N6,N6-dimethyllysine; alternate" evidence="1">
    <location>
        <position position="15"/>
    </location>
</feature>
<feature type="modified residue" description="N6-acetyllysine; alternate" evidence="1">
    <location>
        <position position="15"/>
    </location>
</feature>
<feature type="modified residue" description="N6-acetyllysine; alternate" evidence="1">
    <location>
        <position position="19"/>
    </location>
</feature>
<feature type="modified residue" description="N6-methyllysine; alternate" evidence="1">
    <location>
        <position position="19"/>
    </location>
</feature>
<feature type="modified residue" description="N6-acetyllysine; alternate" evidence="1">
    <location>
        <position position="24"/>
    </location>
</feature>
<feature type="modified residue" description="N6-methyllysine; alternate" evidence="1">
    <location>
        <position position="24"/>
    </location>
</feature>
<feature type="modified residue" description="N6,N6,N6-trimethyllysine; alternate" evidence="1">
    <location>
        <position position="28"/>
    </location>
</feature>
<feature type="modified residue" description="N6,N6-dimethyllysine; alternate" evidence="1">
    <location>
        <position position="28"/>
    </location>
</feature>
<feature type="modified residue" description="N6-acetyllysine; alternate" evidence="1">
    <location>
        <position position="28"/>
    </location>
</feature>
<feature type="modified residue" description="N6-methyllysine; alternate" evidence="1">
    <location>
        <position position="28"/>
    </location>
</feature>
<feature type="modified residue" description="N6,N6,N6-trimethyllysine; alternate" evidence="1">
    <location>
        <position position="37"/>
    </location>
</feature>
<feature type="modified residue" description="N6,N6-dimethyllysine; alternate" evidence="1">
    <location>
        <position position="37"/>
    </location>
</feature>
<feature type="modified residue" description="N6-acetyllysine; alternate" evidence="1">
    <location>
        <position position="37"/>
    </location>
</feature>
<feature type="modified residue" description="N6-methyllysine; alternate" evidence="1">
    <location>
        <position position="37"/>
    </location>
</feature>
<feature type="modified residue" description="N6-acetyllysine" evidence="1">
    <location>
        <position position="57"/>
    </location>
</feature>
<feature type="modified residue" description="N6-acetyllysine" evidence="1">
    <location>
        <position position="65"/>
    </location>
</feature>
<feature type="modified residue" description="N6,N6,N6-trimethyllysine; alternate" evidence="1">
    <location>
        <position position="80"/>
    </location>
</feature>
<feature type="modified residue" description="N6,N6-dimethyllysine; alternate" evidence="1">
    <location>
        <position position="80"/>
    </location>
</feature>
<feature type="modified residue" description="N6-methyllysine; alternate" evidence="1">
    <location>
        <position position="80"/>
    </location>
</feature>
<accession>Q0UY45</accession>
<proteinExistence type="inferred from homology"/>
<evidence type="ECO:0000250" key="1"/>
<evidence type="ECO:0000256" key="2">
    <source>
        <dbReference type="SAM" id="MobiDB-lite"/>
    </source>
</evidence>
<evidence type="ECO:0000305" key="3"/>